<sequence>MSKTSKAYRAAAAKVDRTNLYTPLQAAKLAKETSSTKQDATVEVAIRLGVDPRKADQMVRGTVNLPHGTGKTARVAVFAVGEKADAAVAAGADVVGSDDLIERIQGGWLEFDAAIATPDQMAKVGRIARVLGPRGLMPNPKTGTVTADVAKAVADIKGGKINFRVDKQANLHFVIGKASFDEKLLAENYGAAIDEVLRLKPSSSKGRYLKKITVSTTTGPGIPVDPSITRNFAGE</sequence>
<keyword id="KW-1185">Reference proteome</keyword>
<keyword id="KW-0678">Repressor</keyword>
<keyword id="KW-0687">Ribonucleoprotein</keyword>
<keyword id="KW-0689">Ribosomal protein</keyword>
<keyword id="KW-0694">RNA-binding</keyword>
<keyword id="KW-0699">rRNA-binding</keyword>
<keyword id="KW-0810">Translation regulation</keyword>
<keyword id="KW-0820">tRNA-binding</keyword>
<organism>
    <name type="scientific">Mycobacterium tuberculosis (strain ATCC 25177 / H37Ra)</name>
    <dbReference type="NCBI Taxonomy" id="419947"/>
    <lineage>
        <taxon>Bacteria</taxon>
        <taxon>Bacillati</taxon>
        <taxon>Actinomycetota</taxon>
        <taxon>Actinomycetes</taxon>
        <taxon>Mycobacteriales</taxon>
        <taxon>Mycobacteriaceae</taxon>
        <taxon>Mycobacterium</taxon>
        <taxon>Mycobacterium tuberculosis complex</taxon>
    </lineage>
</organism>
<name>RL1_MYCTA</name>
<dbReference type="EMBL" id="CP000611">
    <property type="protein sequence ID" value="ABQ72376.1"/>
    <property type="molecule type" value="Genomic_DNA"/>
</dbReference>
<dbReference type="RefSeq" id="WP_003403292.1">
    <property type="nucleotide sequence ID" value="NZ_CP016972.1"/>
</dbReference>
<dbReference type="SMR" id="A5U026"/>
<dbReference type="GeneID" id="45424601"/>
<dbReference type="KEGG" id="mra:MRA_0652"/>
<dbReference type="eggNOG" id="COG0081">
    <property type="taxonomic scope" value="Bacteria"/>
</dbReference>
<dbReference type="HOGENOM" id="CLU_062853_0_0_11"/>
<dbReference type="Proteomes" id="UP000001988">
    <property type="component" value="Chromosome"/>
</dbReference>
<dbReference type="GO" id="GO:0015934">
    <property type="term" value="C:large ribosomal subunit"/>
    <property type="evidence" value="ECO:0007669"/>
    <property type="project" value="InterPro"/>
</dbReference>
<dbReference type="GO" id="GO:0019843">
    <property type="term" value="F:rRNA binding"/>
    <property type="evidence" value="ECO:0007669"/>
    <property type="project" value="UniProtKB-UniRule"/>
</dbReference>
<dbReference type="GO" id="GO:0003735">
    <property type="term" value="F:structural constituent of ribosome"/>
    <property type="evidence" value="ECO:0007669"/>
    <property type="project" value="InterPro"/>
</dbReference>
<dbReference type="GO" id="GO:0000049">
    <property type="term" value="F:tRNA binding"/>
    <property type="evidence" value="ECO:0007669"/>
    <property type="project" value="UniProtKB-KW"/>
</dbReference>
<dbReference type="GO" id="GO:0006417">
    <property type="term" value="P:regulation of translation"/>
    <property type="evidence" value="ECO:0007669"/>
    <property type="project" value="UniProtKB-KW"/>
</dbReference>
<dbReference type="GO" id="GO:0006412">
    <property type="term" value="P:translation"/>
    <property type="evidence" value="ECO:0007669"/>
    <property type="project" value="UniProtKB-UniRule"/>
</dbReference>
<dbReference type="CDD" id="cd00403">
    <property type="entry name" value="Ribosomal_L1"/>
    <property type="match status" value="1"/>
</dbReference>
<dbReference type="FunFam" id="3.40.50.790:FF:000001">
    <property type="entry name" value="50S ribosomal protein L1"/>
    <property type="match status" value="1"/>
</dbReference>
<dbReference type="Gene3D" id="3.30.190.20">
    <property type="match status" value="1"/>
</dbReference>
<dbReference type="Gene3D" id="3.40.50.790">
    <property type="match status" value="1"/>
</dbReference>
<dbReference type="HAMAP" id="MF_01318_B">
    <property type="entry name" value="Ribosomal_uL1_B"/>
    <property type="match status" value="1"/>
</dbReference>
<dbReference type="InterPro" id="IPR005878">
    <property type="entry name" value="Ribosom_uL1_bac-type"/>
</dbReference>
<dbReference type="InterPro" id="IPR002143">
    <property type="entry name" value="Ribosomal_uL1"/>
</dbReference>
<dbReference type="InterPro" id="IPR023674">
    <property type="entry name" value="Ribosomal_uL1-like"/>
</dbReference>
<dbReference type="InterPro" id="IPR028364">
    <property type="entry name" value="Ribosomal_uL1/biogenesis"/>
</dbReference>
<dbReference type="InterPro" id="IPR016095">
    <property type="entry name" value="Ribosomal_uL1_3-a/b-sand"/>
</dbReference>
<dbReference type="InterPro" id="IPR023673">
    <property type="entry name" value="Ribosomal_uL1_CS"/>
</dbReference>
<dbReference type="NCBIfam" id="TIGR01169">
    <property type="entry name" value="rplA_bact"/>
    <property type="match status" value="1"/>
</dbReference>
<dbReference type="PANTHER" id="PTHR36427">
    <property type="entry name" value="54S RIBOSOMAL PROTEIN L1, MITOCHONDRIAL"/>
    <property type="match status" value="1"/>
</dbReference>
<dbReference type="PANTHER" id="PTHR36427:SF3">
    <property type="entry name" value="LARGE RIBOSOMAL SUBUNIT PROTEIN UL1M"/>
    <property type="match status" value="1"/>
</dbReference>
<dbReference type="Pfam" id="PF00687">
    <property type="entry name" value="Ribosomal_L1"/>
    <property type="match status" value="1"/>
</dbReference>
<dbReference type="PIRSF" id="PIRSF002155">
    <property type="entry name" value="Ribosomal_L1"/>
    <property type="match status" value="1"/>
</dbReference>
<dbReference type="SUPFAM" id="SSF56808">
    <property type="entry name" value="Ribosomal protein L1"/>
    <property type="match status" value="1"/>
</dbReference>
<dbReference type="PROSITE" id="PS01199">
    <property type="entry name" value="RIBOSOMAL_L1"/>
    <property type="match status" value="1"/>
</dbReference>
<protein>
    <recommendedName>
        <fullName evidence="1">Large ribosomal subunit protein uL1</fullName>
    </recommendedName>
    <alternativeName>
        <fullName evidence="2">50S ribosomal protein L1</fullName>
    </alternativeName>
</protein>
<gene>
    <name evidence="1" type="primary">rplA</name>
    <name type="ordered locus">MRA_0652</name>
</gene>
<feature type="chain" id="PRO_0000308055" description="Large ribosomal subunit protein uL1">
    <location>
        <begin position="1"/>
        <end position="235"/>
    </location>
</feature>
<reference key="1">
    <citation type="journal article" date="2008" name="PLoS ONE">
        <title>Genetic basis of virulence attenuation revealed by comparative genomic analysis of Mycobacterium tuberculosis strain H37Ra versus H37Rv.</title>
        <authorList>
            <person name="Zheng H."/>
            <person name="Lu L."/>
            <person name="Wang B."/>
            <person name="Pu S."/>
            <person name="Zhang X."/>
            <person name="Zhu G."/>
            <person name="Shi W."/>
            <person name="Zhang L."/>
            <person name="Wang H."/>
            <person name="Wang S."/>
            <person name="Zhao G."/>
            <person name="Zhang Y."/>
        </authorList>
    </citation>
    <scope>NUCLEOTIDE SEQUENCE [LARGE SCALE GENOMIC DNA]</scope>
    <source>
        <strain>ATCC 25177 / H37Ra</strain>
    </source>
</reference>
<proteinExistence type="inferred from homology"/>
<evidence type="ECO:0000255" key="1">
    <source>
        <dbReference type="HAMAP-Rule" id="MF_01318"/>
    </source>
</evidence>
<evidence type="ECO:0000305" key="2"/>
<comment type="function">
    <text evidence="1">Binds directly to 23S rRNA. The L1 stalk is quite mobile in the ribosome, and is involved in E site tRNA release.</text>
</comment>
<comment type="function">
    <text evidence="1">Protein L1 is also a translational repressor protein, it controls the translation of the L11 operon by binding to its mRNA.</text>
</comment>
<comment type="subunit">
    <text evidence="1">Part of the 50S ribosomal subunit.</text>
</comment>
<comment type="similarity">
    <text evidence="1">Belongs to the universal ribosomal protein uL1 family.</text>
</comment>
<accession>A5U026</accession>